<proteinExistence type="inferred from homology"/>
<sequence length="351" mass="36146">MTATIKLGELAEFLGATLRGSPEKEITGLATLQEAGPAQLSFLANPQYRKYLVDSQAAAVLLKAADAEGFAGDALVVADPYLAYARVSHLFDPKPKAAAGVHPSAVIADDAQVDPAASIGAFAVVESGARIAAGVTVGAHCFIGARCEIGADGWLAPRVTLYHDVRIGERVVIQSGAVIGGEGFGFANAKGIWNKIAQVGGVLIGDDVEIGVNTAVDRGALADTVIGNGVKLDNQIQIAHNVQIGDHTAMAACVGISGSTKIGKHCMLAGGVGLVGHIDICDNVFITGMTMVTHSITEPGAYSSGTAMQPAAEWRKSAARLRQLDDMARRLKQLEKRVGDVTPGGNASSEG</sequence>
<reference key="1">
    <citation type="journal article" date="2009" name="Genome Biol.">
        <title>Genomic and genetic analyses of diversity and plant interactions of Pseudomonas fluorescens.</title>
        <authorList>
            <person name="Silby M.W."/>
            <person name="Cerdeno-Tarraga A.M."/>
            <person name="Vernikos G.S."/>
            <person name="Giddens S.R."/>
            <person name="Jackson R.W."/>
            <person name="Preston G.M."/>
            <person name="Zhang X.-X."/>
            <person name="Moon C.D."/>
            <person name="Gehrig S.M."/>
            <person name="Godfrey S.A.C."/>
            <person name="Knight C.G."/>
            <person name="Malone J.G."/>
            <person name="Robinson Z."/>
            <person name="Spiers A.J."/>
            <person name="Harris S."/>
            <person name="Challis G.L."/>
            <person name="Yaxley A.M."/>
            <person name="Harris D."/>
            <person name="Seeger K."/>
            <person name="Murphy L."/>
            <person name="Rutter S."/>
            <person name="Squares R."/>
            <person name="Quail M.A."/>
            <person name="Saunders E."/>
            <person name="Mavromatis K."/>
            <person name="Brettin T.S."/>
            <person name="Bentley S.D."/>
            <person name="Hothersall J."/>
            <person name="Stephens E."/>
            <person name="Thomas C.M."/>
            <person name="Parkhill J."/>
            <person name="Levy S.B."/>
            <person name="Rainey P.B."/>
            <person name="Thomson N.R."/>
        </authorList>
    </citation>
    <scope>NUCLEOTIDE SEQUENCE [LARGE SCALE GENOMIC DNA]</scope>
    <source>
        <strain>SBW25</strain>
    </source>
</reference>
<organism>
    <name type="scientific">Pseudomonas fluorescens (strain SBW25)</name>
    <dbReference type="NCBI Taxonomy" id="216595"/>
    <lineage>
        <taxon>Bacteria</taxon>
        <taxon>Pseudomonadati</taxon>
        <taxon>Pseudomonadota</taxon>
        <taxon>Gammaproteobacteria</taxon>
        <taxon>Pseudomonadales</taxon>
        <taxon>Pseudomonadaceae</taxon>
        <taxon>Pseudomonas</taxon>
    </lineage>
</organism>
<dbReference type="EC" id="2.3.1.191" evidence="1"/>
<dbReference type="EMBL" id="AM181176">
    <property type="protein sequence ID" value="CAY47537.1"/>
    <property type="molecule type" value="Genomic_DNA"/>
</dbReference>
<dbReference type="RefSeq" id="WP_012722602.1">
    <property type="nucleotide sequence ID" value="NC_012660.1"/>
</dbReference>
<dbReference type="SMR" id="C3K605"/>
<dbReference type="STRING" id="294.SRM1_01139"/>
<dbReference type="eggNOG" id="COG1044">
    <property type="taxonomic scope" value="Bacteria"/>
</dbReference>
<dbReference type="HOGENOM" id="CLU_049865_0_1_6"/>
<dbReference type="OrthoDB" id="9784739at2"/>
<dbReference type="UniPathway" id="UPA00973"/>
<dbReference type="GO" id="GO:0016020">
    <property type="term" value="C:membrane"/>
    <property type="evidence" value="ECO:0007669"/>
    <property type="project" value="GOC"/>
</dbReference>
<dbReference type="GO" id="GO:0016410">
    <property type="term" value="F:N-acyltransferase activity"/>
    <property type="evidence" value="ECO:0007669"/>
    <property type="project" value="InterPro"/>
</dbReference>
<dbReference type="GO" id="GO:0009245">
    <property type="term" value="P:lipid A biosynthetic process"/>
    <property type="evidence" value="ECO:0007669"/>
    <property type="project" value="UniProtKB-UniRule"/>
</dbReference>
<dbReference type="CDD" id="cd03352">
    <property type="entry name" value="LbH_LpxD"/>
    <property type="match status" value="1"/>
</dbReference>
<dbReference type="Gene3D" id="1.20.5.170">
    <property type="match status" value="1"/>
</dbReference>
<dbReference type="Gene3D" id="2.160.10.10">
    <property type="entry name" value="Hexapeptide repeat proteins"/>
    <property type="match status" value="1"/>
</dbReference>
<dbReference type="Gene3D" id="3.40.1390.10">
    <property type="entry name" value="MurE/MurF, N-terminal domain"/>
    <property type="match status" value="1"/>
</dbReference>
<dbReference type="HAMAP" id="MF_00523">
    <property type="entry name" value="LpxD"/>
    <property type="match status" value="1"/>
</dbReference>
<dbReference type="InterPro" id="IPR001451">
    <property type="entry name" value="Hexapep"/>
</dbReference>
<dbReference type="InterPro" id="IPR018357">
    <property type="entry name" value="Hexapep_transf_CS"/>
</dbReference>
<dbReference type="InterPro" id="IPR007691">
    <property type="entry name" value="LpxD"/>
</dbReference>
<dbReference type="InterPro" id="IPR011004">
    <property type="entry name" value="Trimer_LpxA-like_sf"/>
</dbReference>
<dbReference type="InterPro" id="IPR020573">
    <property type="entry name" value="UDP_GlcNAc_AcTrfase_non-rep"/>
</dbReference>
<dbReference type="NCBIfam" id="TIGR01853">
    <property type="entry name" value="lipid_A_lpxD"/>
    <property type="match status" value="1"/>
</dbReference>
<dbReference type="NCBIfam" id="NF002060">
    <property type="entry name" value="PRK00892.1"/>
    <property type="match status" value="1"/>
</dbReference>
<dbReference type="PANTHER" id="PTHR43378">
    <property type="entry name" value="UDP-3-O-ACYLGLUCOSAMINE N-ACYLTRANSFERASE"/>
    <property type="match status" value="1"/>
</dbReference>
<dbReference type="PANTHER" id="PTHR43378:SF2">
    <property type="entry name" value="UDP-3-O-ACYLGLUCOSAMINE N-ACYLTRANSFERASE 1, MITOCHONDRIAL-RELATED"/>
    <property type="match status" value="1"/>
</dbReference>
<dbReference type="Pfam" id="PF00132">
    <property type="entry name" value="Hexapep"/>
    <property type="match status" value="2"/>
</dbReference>
<dbReference type="Pfam" id="PF04613">
    <property type="entry name" value="LpxD"/>
    <property type="match status" value="1"/>
</dbReference>
<dbReference type="SUPFAM" id="SSF51161">
    <property type="entry name" value="Trimeric LpxA-like enzymes"/>
    <property type="match status" value="1"/>
</dbReference>
<dbReference type="PROSITE" id="PS00101">
    <property type="entry name" value="HEXAPEP_TRANSFERASES"/>
    <property type="match status" value="1"/>
</dbReference>
<evidence type="ECO:0000255" key="1">
    <source>
        <dbReference type="HAMAP-Rule" id="MF_00523"/>
    </source>
</evidence>
<feature type="chain" id="PRO_1000211752" description="UDP-3-O-acylglucosamine N-acyltransferase">
    <location>
        <begin position="1"/>
        <end position="351"/>
    </location>
</feature>
<feature type="active site" description="Proton acceptor" evidence="1">
    <location>
        <position position="240"/>
    </location>
</feature>
<keyword id="KW-0012">Acyltransferase</keyword>
<keyword id="KW-0441">Lipid A biosynthesis</keyword>
<keyword id="KW-0444">Lipid biosynthesis</keyword>
<keyword id="KW-0443">Lipid metabolism</keyword>
<keyword id="KW-0677">Repeat</keyword>
<keyword id="KW-0808">Transferase</keyword>
<comment type="function">
    <text evidence="1">Catalyzes the N-acylation of UDP-3-O-acylglucosamine using 3-hydroxyacyl-ACP as the acyl donor. Is involved in the biosynthesis of lipid A, a phosphorylated glycolipid that anchors the lipopolysaccharide to the outer membrane of the cell.</text>
</comment>
<comment type="catalytic activity">
    <reaction evidence="1">
        <text>a UDP-3-O-[(3R)-3-hydroxyacyl]-alpha-D-glucosamine + a (3R)-hydroxyacyl-[ACP] = a UDP-2-N,3-O-bis[(3R)-3-hydroxyacyl]-alpha-D-glucosamine + holo-[ACP] + H(+)</text>
        <dbReference type="Rhea" id="RHEA:53836"/>
        <dbReference type="Rhea" id="RHEA-COMP:9685"/>
        <dbReference type="Rhea" id="RHEA-COMP:9945"/>
        <dbReference type="ChEBI" id="CHEBI:15378"/>
        <dbReference type="ChEBI" id="CHEBI:64479"/>
        <dbReference type="ChEBI" id="CHEBI:78827"/>
        <dbReference type="ChEBI" id="CHEBI:137740"/>
        <dbReference type="ChEBI" id="CHEBI:137748"/>
        <dbReference type="EC" id="2.3.1.191"/>
    </reaction>
</comment>
<comment type="pathway">
    <text evidence="1">Bacterial outer membrane biogenesis; LPS lipid A biosynthesis.</text>
</comment>
<comment type="subunit">
    <text evidence="1">Homotrimer.</text>
</comment>
<comment type="similarity">
    <text evidence="1">Belongs to the transferase hexapeptide repeat family. LpxD subfamily.</text>
</comment>
<gene>
    <name evidence="1" type="primary">lpxD</name>
    <name type="ordered locus">PFLU_1280</name>
</gene>
<protein>
    <recommendedName>
        <fullName evidence="1">UDP-3-O-acylglucosamine N-acyltransferase</fullName>
        <ecNumber evidence="1">2.3.1.191</ecNumber>
    </recommendedName>
</protein>
<accession>C3K605</accession>
<name>LPXD_PSEFS</name>